<feature type="chain" id="PRO_0000362339" description="ATP synthase subunit a">
    <location>
        <begin position="1"/>
        <end position="259"/>
    </location>
</feature>
<feature type="transmembrane region" description="Helical" evidence="1">
    <location>
        <begin position="37"/>
        <end position="57"/>
    </location>
</feature>
<feature type="transmembrane region" description="Helical" evidence="1">
    <location>
        <begin position="101"/>
        <end position="121"/>
    </location>
</feature>
<feature type="transmembrane region" description="Helical" evidence="1">
    <location>
        <begin position="131"/>
        <end position="151"/>
    </location>
</feature>
<feature type="transmembrane region" description="Helical" evidence="1">
    <location>
        <begin position="157"/>
        <end position="177"/>
    </location>
</feature>
<feature type="transmembrane region" description="Helical" evidence="1">
    <location>
        <begin position="203"/>
        <end position="223"/>
    </location>
</feature>
<feature type="transmembrane region" description="Helical" evidence="1">
    <location>
        <begin position="232"/>
        <end position="252"/>
    </location>
</feature>
<name>ATP6_MAGMM</name>
<dbReference type="EMBL" id="CP000471">
    <property type="protein sequence ID" value="ABK46159.1"/>
    <property type="status" value="ALT_INIT"/>
    <property type="molecule type" value="Genomic_DNA"/>
</dbReference>
<dbReference type="RefSeq" id="WP_227665284.1">
    <property type="nucleotide sequence ID" value="NC_008576.1"/>
</dbReference>
<dbReference type="SMR" id="A0LDW6"/>
<dbReference type="STRING" id="156889.Mmc1_3674"/>
<dbReference type="KEGG" id="mgm:Mmc1_3674"/>
<dbReference type="eggNOG" id="COG0356">
    <property type="taxonomic scope" value="Bacteria"/>
</dbReference>
<dbReference type="HOGENOM" id="CLU_041018_0_2_5"/>
<dbReference type="Proteomes" id="UP000002586">
    <property type="component" value="Chromosome"/>
</dbReference>
<dbReference type="GO" id="GO:0005886">
    <property type="term" value="C:plasma membrane"/>
    <property type="evidence" value="ECO:0007669"/>
    <property type="project" value="UniProtKB-SubCell"/>
</dbReference>
<dbReference type="GO" id="GO:0045259">
    <property type="term" value="C:proton-transporting ATP synthase complex"/>
    <property type="evidence" value="ECO:0007669"/>
    <property type="project" value="UniProtKB-KW"/>
</dbReference>
<dbReference type="GO" id="GO:0046933">
    <property type="term" value="F:proton-transporting ATP synthase activity, rotational mechanism"/>
    <property type="evidence" value="ECO:0007669"/>
    <property type="project" value="UniProtKB-UniRule"/>
</dbReference>
<dbReference type="CDD" id="cd00310">
    <property type="entry name" value="ATP-synt_Fo_a_6"/>
    <property type="match status" value="1"/>
</dbReference>
<dbReference type="Gene3D" id="1.20.120.220">
    <property type="entry name" value="ATP synthase, F0 complex, subunit A"/>
    <property type="match status" value="1"/>
</dbReference>
<dbReference type="HAMAP" id="MF_01393">
    <property type="entry name" value="ATP_synth_a_bact"/>
    <property type="match status" value="1"/>
</dbReference>
<dbReference type="InterPro" id="IPR000568">
    <property type="entry name" value="ATP_synth_F0_asu"/>
</dbReference>
<dbReference type="InterPro" id="IPR023011">
    <property type="entry name" value="ATP_synth_F0_asu_AS"/>
</dbReference>
<dbReference type="InterPro" id="IPR045083">
    <property type="entry name" value="ATP_synth_F0_asu_bact/mt"/>
</dbReference>
<dbReference type="InterPro" id="IPR035908">
    <property type="entry name" value="F0_ATP_A_sf"/>
</dbReference>
<dbReference type="NCBIfam" id="TIGR01131">
    <property type="entry name" value="ATP_synt_6_or_A"/>
    <property type="match status" value="1"/>
</dbReference>
<dbReference type="NCBIfam" id="NF004482">
    <property type="entry name" value="PRK05815.2-4"/>
    <property type="match status" value="1"/>
</dbReference>
<dbReference type="PANTHER" id="PTHR11410">
    <property type="entry name" value="ATP SYNTHASE SUBUNIT A"/>
    <property type="match status" value="1"/>
</dbReference>
<dbReference type="PANTHER" id="PTHR11410:SF0">
    <property type="entry name" value="ATP SYNTHASE SUBUNIT A"/>
    <property type="match status" value="1"/>
</dbReference>
<dbReference type="Pfam" id="PF00119">
    <property type="entry name" value="ATP-synt_A"/>
    <property type="match status" value="1"/>
</dbReference>
<dbReference type="PRINTS" id="PR00123">
    <property type="entry name" value="ATPASEA"/>
</dbReference>
<dbReference type="SUPFAM" id="SSF81336">
    <property type="entry name" value="F1F0 ATP synthase subunit A"/>
    <property type="match status" value="1"/>
</dbReference>
<dbReference type="PROSITE" id="PS00449">
    <property type="entry name" value="ATPASE_A"/>
    <property type="match status" value="1"/>
</dbReference>
<accession>A0LDW6</accession>
<proteinExistence type="inferred from homology"/>
<protein>
    <recommendedName>
        <fullName evidence="1">ATP synthase subunit a</fullName>
    </recommendedName>
    <alternativeName>
        <fullName evidence="1">ATP synthase F0 sector subunit a</fullName>
    </alternativeName>
    <alternativeName>
        <fullName evidence="1">F-ATPase subunit 6</fullName>
    </alternativeName>
</protein>
<comment type="function">
    <text evidence="1">Key component of the proton channel; it plays a direct role in the translocation of protons across the membrane.</text>
</comment>
<comment type="subunit">
    <text evidence="1">F-type ATPases have 2 components, CF(1) - the catalytic core - and CF(0) - the membrane proton channel. CF(1) has five subunits: alpha(3), beta(3), gamma(1), delta(1), epsilon(1). CF(0) has three main subunits: a(1), b(2) and c(9-12). The alpha and beta chains form an alternating ring which encloses part of the gamma chain. CF(1) is attached to CF(0) by a central stalk formed by the gamma and epsilon chains, while a peripheral stalk is formed by the delta and b chains.</text>
</comment>
<comment type="subcellular location">
    <subcellularLocation>
        <location evidence="1">Cell inner membrane</location>
        <topology evidence="1">Multi-pass membrane protein</topology>
    </subcellularLocation>
</comment>
<comment type="similarity">
    <text evidence="1">Belongs to the ATPase A chain family.</text>
</comment>
<comment type="sequence caution" evidence="2">
    <conflict type="erroneous initiation">
        <sequence resource="EMBL-CDS" id="ABK46159"/>
    </conflict>
</comment>
<organism>
    <name type="scientific">Magnetococcus marinus (strain ATCC BAA-1437 / JCM 17883 / MC-1)</name>
    <dbReference type="NCBI Taxonomy" id="156889"/>
    <lineage>
        <taxon>Bacteria</taxon>
        <taxon>Pseudomonadati</taxon>
        <taxon>Pseudomonadota</taxon>
        <taxon>Alphaproteobacteria</taxon>
        <taxon>Magnetococcales</taxon>
        <taxon>Magnetococcaceae</taxon>
        <taxon>Magnetococcus</taxon>
    </lineage>
</organism>
<sequence>MSAEAMHAAASAAPKMDPLHHFMVQKVVPIEIAGIDLSITNSTIWMWLAVAVAFLFMKWSFRGRAEDKLIPTKMQSLAEMTFTFVRQIVDQNIGGAEGRKYFPAIFTLFLLVLFCNLLGLIPGSFTPTSQLVVTATLALSVFFFATGLAIVKHGTGFIGFFVPSGVPPMLLILMVPIEIVSYLSRPVSLSVRLFANMTAGHTVLAIMFFFAATLPLGGLLMPAAFATVFTGFELFIGFIQAYIFTILTCVYINDALHLH</sequence>
<gene>
    <name evidence="1" type="primary">atpB</name>
    <name type="ordered locus">Mmc1_3674</name>
</gene>
<reference key="1">
    <citation type="journal article" date="2009" name="Appl. Environ. Microbiol.">
        <title>Complete genome sequence of the chemolithoautotrophic marine magnetotactic coccus strain MC-1.</title>
        <authorList>
            <person name="Schubbe S."/>
            <person name="Williams T.J."/>
            <person name="Xie G."/>
            <person name="Kiss H.E."/>
            <person name="Brettin T.S."/>
            <person name="Martinez D."/>
            <person name="Ross C.A."/>
            <person name="Schuler D."/>
            <person name="Cox B.L."/>
            <person name="Nealson K.H."/>
            <person name="Bazylinski D.A."/>
        </authorList>
    </citation>
    <scope>NUCLEOTIDE SEQUENCE [LARGE SCALE GENOMIC DNA]</scope>
    <source>
        <strain>ATCC BAA-1437 / JCM 17883 / MC-1</strain>
    </source>
</reference>
<evidence type="ECO:0000255" key="1">
    <source>
        <dbReference type="HAMAP-Rule" id="MF_01393"/>
    </source>
</evidence>
<evidence type="ECO:0000305" key="2"/>
<keyword id="KW-0066">ATP synthesis</keyword>
<keyword id="KW-0997">Cell inner membrane</keyword>
<keyword id="KW-1003">Cell membrane</keyword>
<keyword id="KW-0138">CF(0)</keyword>
<keyword id="KW-0375">Hydrogen ion transport</keyword>
<keyword id="KW-0406">Ion transport</keyword>
<keyword id="KW-0472">Membrane</keyword>
<keyword id="KW-1185">Reference proteome</keyword>
<keyword id="KW-0812">Transmembrane</keyword>
<keyword id="KW-1133">Transmembrane helix</keyword>
<keyword id="KW-0813">Transport</keyword>